<organism>
    <name type="scientific">Drosophila melanogaster</name>
    <name type="common">Fruit fly</name>
    <dbReference type="NCBI Taxonomy" id="7227"/>
    <lineage>
        <taxon>Eukaryota</taxon>
        <taxon>Metazoa</taxon>
        <taxon>Ecdysozoa</taxon>
        <taxon>Arthropoda</taxon>
        <taxon>Hexapoda</taxon>
        <taxon>Insecta</taxon>
        <taxon>Pterygota</taxon>
        <taxon>Neoptera</taxon>
        <taxon>Endopterygota</taxon>
        <taxon>Diptera</taxon>
        <taxon>Brachycera</taxon>
        <taxon>Muscomorpha</taxon>
        <taxon>Ephydroidea</taxon>
        <taxon>Drosophilidae</taxon>
        <taxon>Drosophila</taxon>
        <taxon>Sophophora</taxon>
    </lineage>
</organism>
<feature type="chain" id="PRO_0000136782" description="NHP2-like protein 1 homolog">
    <location>
        <begin position="1"/>
        <end position="127"/>
    </location>
</feature>
<protein>
    <recommendedName>
        <fullName>NHP2-like protein 1 homolog</fullName>
    </recommendedName>
    <alternativeName>
        <fullName>Protein hoi-polloi</fullName>
    </alternativeName>
</protein>
<evidence type="ECO:0000250" key="1"/>
<evidence type="ECO:0000305" key="2"/>
<comment type="function">
    <text evidence="1">Binds to the 5'-stem-loop of U4 snRNA and may play a role in the late stage of spliceosome assembly. The protein undergoes a conformational change upon RNA-binding (By similarity).</text>
</comment>
<comment type="subcellular location">
    <subcellularLocation>
        <location evidence="1">Nucleus</location>
        <location evidence="1">Nucleolus</location>
    </subcellularLocation>
</comment>
<comment type="similarity">
    <text evidence="2">Belongs to the eukaryotic ribosomal protein eL8 family.</text>
</comment>
<dbReference type="EMBL" id="AF208396">
    <property type="protein sequence ID" value="AAF20209.1"/>
    <property type="molecule type" value="mRNA"/>
</dbReference>
<dbReference type="EMBL" id="AE014134">
    <property type="protein sequence ID" value="AAF52798.2"/>
    <property type="molecule type" value="Genomic_DNA"/>
</dbReference>
<dbReference type="RefSeq" id="NP_001260293.1">
    <property type="nucleotide sequence ID" value="NM_001273364.1"/>
</dbReference>
<dbReference type="RefSeq" id="NP_524714.1">
    <property type="nucleotide sequence ID" value="NM_079975.4"/>
</dbReference>
<dbReference type="SMR" id="Q9U3Z7"/>
<dbReference type="BioGRID" id="68878">
    <property type="interactions" value="21"/>
</dbReference>
<dbReference type="DIP" id="DIP-21473N"/>
<dbReference type="FunCoup" id="Q9U3Z7">
    <property type="interactions" value="1778"/>
</dbReference>
<dbReference type="IntAct" id="Q9U3Z7">
    <property type="interactions" value="8"/>
</dbReference>
<dbReference type="STRING" id="7227.FBpp0307465"/>
<dbReference type="PaxDb" id="7227-FBpp0079443"/>
<dbReference type="DNASU" id="44173"/>
<dbReference type="EnsemblMetazoa" id="FBtr0079846">
    <property type="protein sequence ID" value="FBpp0079443"/>
    <property type="gene ID" value="FBgn0286786"/>
</dbReference>
<dbReference type="EnsemblMetazoa" id="FBtr0335494">
    <property type="protein sequence ID" value="FBpp0307465"/>
    <property type="gene ID" value="FBgn0286786"/>
</dbReference>
<dbReference type="GeneID" id="44173"/>
<dbReference type="KEGG" id="dme:Dmel_CG3949"/>
<dbReference type="UCSC" id="CG3949-RA">
    <property type="organism name" value="d. melanogaster"/>
</dbReference>
<dbReference type="AGR" id="FB:FBgn0286786"/>
<dbReference type="CTD" id="44173"/>
<dbReference type="FlyBase" id="FBgn0286786">
    <property type="gene designation" value="hoip"/>
</dbReference>
<dbReference type="VEuPathDB" id="VectorBase:FBgn0286786"/>
<dbReference type="eggNOG" id="KOG3387">
    <property type="taxonomic scope" value="Eukaryota"/>
</dbReference>
<dbReference type="GeneTree" id="ENSGT00550000074840"/>
<dbReference type="HOGENOM" id="CLU_084513_4_1_1"/>
<dbReference type="InParanoid" id="Q9U3Z7"/>
<dbReference type="OMA" id="LACEDKG"/>
<dbReference type="OrthoDB" id="1924699at2759"/>
<dbReference type="PhylomeDB" id="Q9U3Z7"/>
<dbReference type="Reactome" id="R-DME-6791226">
    <property type="pathway name" value="Major pathway of rRNA processing in the nucleolus and cytosol"/>
</dbReference>
<dbReference type="SignaLink" id="Q9U3Z7"/>
<dbReference type="BioGRID-ORCS" id="44173">
    <property type="hits" value="1 hit in 1 CRISPR screen"/>
</dbReference>
<dbReference type="GenomeRNAi" id="44173"/>
<dbReference type="PRO" id="PR:Q9U3Z7"/>
<dbReference type="Proteomes" id="UP000000803">
    <property type="component" value="Chromosome 2L"/>
</dbReference>
<dbReference type="Bgee" id="FBgn0286786">
    <property type="expression patterns" value="Expressed in adult abdomen and 124 other cell types or tissues"/>
</dbReference>
<dbReference type="ExpressionAtlas" id="Q9U3Z7">
    <property type="expression patterns" value="baseline and differential"/>
</dbReference>
<dbReference type="GO" id="GO:0031428">
    <property type="term" value="C:box C/D methylation guide snoRNP complex"/>
    <property type="evidence" value="ECO:0000318"/>
    <property type="project" value="GO_Central"/>
</dbReference>
<dbReference type="GO" id="GO:0005730">
    <property type="term" value="C:nucleolus"/>
    <property type="evidence" value="ECO:0000318"/>
    <property type="project" value="GO_Central"/>
</dbReference>
<dbReference type="GO" id="GO:0071011">
    <property type="term" value="C:precatalytic spliceosome"/>
    <property type="evidence" value="ECO:0007005"/>
    <property type="project" value="FlyBase"/>
</dbReference>
<dbReference type="GO" id="GO:0030532">
    <property type="term" value="C:small nuclear ribonucleoprotein complex"/>
    <property type="evidence" value="ECO:0000250"/>
    <property type="project" value="FlyBase"/>
</dbReference>
<dbReference type="GO" id="GO:0032040">
    <property type="term" value="C:small-subunit processome"/>
    <property type="evidence" value="ECO:0000318"/>
    <property type="project" value="GO_Central"/>
</dbReference>
<dbReference type="GO" id="GO:0046540">
    <property type="term" value="C:U4/U6 x U5 tri-snRNP complex"/>
    <property type="evidence" value="ECO:0000318"/>
    <property type="project" value="GO_Central"/>
</dbReference>
<dbReference type="GO" id="GO:0003723">
    <property type="term" value="F:RNA binding"/>
    <property type="evidence" value="ECO:0000318"/>
    <property type="project" value="GO_Central"/>
</dbReference>
<dbReference type="GO" id="GO:0030490">
    <property type="term" value="P:maturation of SSU-rRNA"/>
    <property type="evidence" value="ECO:0000318"/>
    <property type="project" value="GO_Central"/>
</dbReference>
<dbReference type="GO" id="GO:0000398">
    <property type="term" value="P:mRNA splicing, via spliceosome"/>
    <property type="evidence" value="ECO:0000250"/>
    <property type="project" value="FlyBase"/>
</dbReference>
<dbReference type="GO" id="GO:0060415">
    <property type="term" value="P:muscle tissue morphogenesis"/>
    <property type="evidence" value="ECO:0000315"/>
    <property type="project" value="FlyBase"/>
</dbReference>
<dbReference type="GO" id="GO:0045727">
    <property type="term" value="P:positive regulation of translation"/>
    <property type="evidence" value="ECO:0000315"/>
    <property type="project" value="FlyBase"/>
</dbReference>
<dbReference type="GO" id="GO:0010608">
    <property type="term" value="P:post-transcriptional regulation of gene expression"/>
    <property type="evidence" value="ECO:0000315"/>
    <property type="project" value="FlyBase"/>
</dbReference>
<dbReference type="CDD" id="cd21104">
    <property type="entry name" value="SNU13"/>
    <property type="match status" value="1"/>
</dbReference>
<dbReference type="FunFam" id="3.30.1330.30:FF:000002">
    <property type="entry name" value="NHP2-like protein 1 homolog"/>
    <property type="match status" value="1"/>
</dbReference>
<dbReference type="Gene3D" id="3.30.1330.30">
    <property type="match status" value="1"/>
</dbReference>
<dbReference type="InterPro" id="IPR050257">
    <property type="entry name" value="eL8/uL1-like"/>
</dbReference>
<dbReference type="InterPro" id="IPR002415">
    <property type="entry name" value="H/ACA_rnp_Nhp2-like"/>
</dbReference>
<dbReference type="InterPro" id="IPR029064">
    <property type="entry name" value="Ribosomal_eL30-like_sf"/>
</dbReference>
<dbReference type="InterPro" id="IPR004037">
    <property type="entry name" value="Ribosomal_eL8-like_CS"/>
</dbReference>
<dbReference type="InterPro" id="IPR004038">
    <property type="entry name" value="Ribosomal_eL8/eL30/eS12/Gad45"/>
</dbReference>
<dbReference type="InterPro" id="IPR018492">
    <property type="entry name" value="Ribosomal_eL8/Nhp2"/>
</dbReference>
<dbReference type="PANTHER" id="PTHR23105">
    <property type="entry name" value="RIBOSOMAL PROTEIN L7AE FAMILY MEMBER"/>
    <property type="match status" value="1"/>
</dbReference>
<dbReference type="Pfam" id="PF01248">
    <property type="entry name" value="Ribosomal_L7Ae"/>
    <property type="match status" value="1"/>
</dbReference>
<dbReference type="PRINTS" id="PR00881">
    <property type="entry name" value="L7ARS6FAMILY"/>
</dbReference>
<dbReference type="PRINTS" id="PR00883">
    <property type="entry name" value="NUCLEARHMG"/>
</dbReference>
<dbReference type="SUPFAM" id="SSF55315">
    <property type="entry name" value="L30e-like"/>
    <property type="match status" value="1"/>
</dbReference>
<dbReference type="PROSITE" id="PS01082">
    <property type="entry name" value="RIBOSOMAL_L7AE"/>
    <property type="match status" value="1"/>
</dbReference>
<sequence>MTEEVNPKAFPLADAQLTAKIMNLLQQALNYNQLRKGANEATKTLNRGLADIVVLAGDAEPIEILLHLPLLCEDKNVPYVFVRSKQALGRACGVSRPIVACSVTTNEGSQLKSQITSIQQEIERLLV</sequence>
<reference key="1">
    <citation type="submission" date="1999-11" db="EMBL/GenBank/DDBJ databases">
        <title>Mutations affecting the development of the peripheral nervous system in Drosophila: a molecular screen for novel genes.</title>
        <authorList>
            <person name="Prokopenko S.N."/>
            <person name="He Y."/>
            <person name="Lu Y."/>
            <person name="Bellen H.J."/>
        </authorList>
    </citation>
    <scope>NUCLEOTIDE SEQUENCE [MRNA]</scope>
</reference>
<reference key="2">
    <citation type="journal article" date="2000" name="Science">
        <title>The genome sequence of Drosophila melanogaster.</title>
        <authorList>
            <person name="Adams M.D."/>
            <person name="Celniker S.E."/>
            <person name="Holt R.A."/>
            <person name="Evans C.A."/>
            <person name="Gocayne J.D."/>
            <person name="Amanatides P.G."/>
            <person name="Scherer S.E."/>
            <person name="Li P.W."/>
            <person name="Hoskins R.A."/>
            <person name="Galle R.F."/>
            <person name="George R.A."/>
            <person name="Lewis S.E."/>
            <person name="Richards S."/>
            <person name="Ashburner M."/>
            <person name="Henderson S.N."/>
            <person name="Sutton G.G."/>
            <person name="Wortman J.R."/>
            <person name="Yandell M.D."/>
            <person name="Zhang Q."/>
            <person name="Chen L.X."/>
            <person name="Brandon R.C."/>
            <person name="Rogers Y.-H.C."/>
            <person name="Blazej R.G."/>
            <person name="Champe M."/>
            <person name="Pfeiffer B.D."/>
            <person name="Wan K.H."/>
            <person name="Doyle C."/>
            <person name="Baxter E.G."/>
            <person name="Helt G."/>
            <person name="Nelson C.R."/>
            <person name="Miklos G.L.G."/>
            <person name="Abril J.F."/>
            <person name="Agbayani A."/>
            <person name="An H.-J."/>
            <person name="Andrews-Pfannkoch C."/>
            <person name="Baldwin D."/>
            <person name="Ballew R.M."/>
            <person name="Basu A."/>
            <person name="Baxendale J."/>
            <person name="Bayraktaroglu L."/>
            <person name="Beasley E.M."/>
            <person name="Beeson K.Y."/>
            <person name="Benos P.V."/>
            <person name="Berman B.P."/>
            <person name="Bhandari D."/>
            <person name="Bolshakov S."/>
            <person name="Borkova D."/>
            <person name="Botchan M.R."/>
            <person name="Bouck J."/>
            <person name="Brokstein P."/>
            <person name="Brottier P."/>
            <person name="Burtis K.C."/>
            <person name="Busam D.A."/>
            <person name="Butler H."/>
            <person name="Cadieu E."/>
            <person name="Center A."/>
            <person name="Chandra I."/>
            <person name="Cherry J.M."/>
            <person name="Cawley S."/>
            <person name="Dahlke C."/>
            <person name="Davenport L.B."/>
            <person name="Davies P."/>
            <person name="de Pablos B."/>
            <person name="Delcher A."/>
            <person name="Deng Z."/>
            <person name="Mays A.D."/>
            <person name="Dew I."/>
            <person name="Dietz S.M."/>
            <person name="Dodson K."/>
            <person name="Doup L.E."/>
            <person name="Downes M."/>
            <person name="Dugan-Rocha S."/>
            <person name="Dunkov B.C."/>
            <person name="Dunn P."/>
            <person name="Durbin K.J."/>
            <person name="Evangelista C.C."/>
            <person name="Ferraz C."/>
            <person name="Ferriera S."/>
            <person name="Fleischmann W."/>
            <person name="Fosler C."/>
            <person name="Gabrielian A.E."/>
            <person name="Garg N.S."/>
            <person name="Gelbart W.M."/>
            <person name="Glasser K."/>
            <person name="Glodek A."/>
            <person name="Gong F."/>
            <person name="Gorrell J.H."/>
            <person name="Gu Z."/>
            <person name="Guan P."/>
            <person name="Harris M."/>
            <person name="Harris N.L."/>
            <person name="Harvey D.A."/>
            <person name="Heiman T.J."/>
            <person name="Hernandez J.R."/>
            <person name="Houck J."/>
            <person name="Hostin D."/>
            <person name="Houston K.A."/>
            <person name="Howland T.J."/>
            <person name="Wei M.-H."/>
            <person name="Ibegwam C."/>
            <person name="Jalali M."/>
            <person name="Kalush F."/>
            <person name="Karpen G.H."/>
            <person name="Ke Z."/>
            <person name="Kennison J.A."/>
            <person name="Ketchum K.A."/>
            <person name="Kimmel B.E."/>
            <person name="Kodira C.D."/>
            <person name="Kraft C.L."/>
            <person name="Kravitz S."/>
            <person name="Kulp D."/>
            <person name="Lai Z."/>
            <person name="Lasko P."/>
            <person name="Lei Y."/>
            <person name="Levitsky A.A."/>
            <person name="Li J.H."/>
            <person name="Li Z."/>
            <person name="Liang Y."/>
            <person name="Lin X."/>
            <person name="Liu X."/>
            <person name="Mattei B."/>
            <person name="McIntosh T.C."/>
            <person name="McLeod M.P."/>
            <person name="McPherson D."/>
            <person name="Merkulov G."/>
            <person name="Milshina N.V."/>
            <person name="Mobarry C."/>
            <person name="Morris J."/>
            <person name="Moshrefi A."/>
            <person name="Mount S.M."/>
            <person name="Moy M."/>
            <person name="Murphy B."/>
            <person name="Murphy L."/>
            <person name="Muzny D.M."/>
            <person name="Nelson D.L."/>
            <person name="Nelson D.R."/>
            <person name="Nelson K.A."/>
            <person name="Nixon K."/>
            <person name="Nusskern D.R."/>
            <person name="Pacleb J.M."/>
            <person name="Palazzolo M."/>
            <person name="Pittman G.S."/>
            <person name="Pan S."/>
            <person name="Pollard J."/>
            <person name="Puri V."/>
            <person name="Reese M.G."/>
            <person name="Reinert K."/>
            <person name="Remington K."/>
            <person name="Saunders R.D.C."/>
            <person name="Scheeler F."/>
            <person name="Shen H."/>
            <person name="Shue B.C."/>
            <person name="Siden-Kiamos I."/>
            <person name="Simpson M."/>
            <person name="Skupski M.P."/>
            <person name="Smith T.J."/>
            <person name="Spier E."/>
            <person name="Spradling A.C."/>
            <person name="Stapleton M."/>
            <person name="Strong R."/>
            <person name="Sun E."/>
            <person name="Svirskas R."/>
            <person name="Tector C."/>
            <person name="Turner R."/>
            <person name="Venter E."/>
            <person name="Wang A.H."/>
            <person name="Wang X."/>
            <person name="Wang Z.-Y."/>
            <person name="Wassarman D.A."/>
            <person name="Weinstock G.M."/>
            <person name="Weissenbach J."/>
            <person name="Williams S.M."/>
            <person name="Woodage T."/>
            <person name="Worley K.C."/>
            <person name="Wu D."/>
            <person name="Yang S."/>
            <person name="Yao Q.A."/>
            <person name="Ye J."/>
            <person name="Yeh R.-F."/>
            <person name="Zaveri J.S."/>
            <person name="Zhan M."/>
            <person name="Zhang G."/>
            <person name="Zhao Q."/>
            <person name="Zheng L."/>
            <person name="Zheng X.H."/>
            <person name="Zhong F.N."/>
            <person name="Zhong W."/>
            <person name="Zhou X."/>
            <person name="Zhu S.C."/>
            <person name="Zhu X."/>
            <person name="Smith H.O."/>
            <person name="Gibbs R.A."/>
            <person name="Myers E.W."/>
            <person name="Rubin G.M."/>
            <person name="Venter J.C."/>
        </authorList>
    </citation>
    <scope>NUCLEOTIDE SEQUENCE [LARGE SCALE GENOMIC DNA]</scope>
    <source>
        <strain>Berkeley</strain>
    </source>
</reference>
<reference key="3">
    <citation type="journal article" date="2002" name="Genome Biol.">
        <title>Annotation of the Drosophila melanogaster euchromatic genome: a systematic review.</title>
        <authorList>
            <person name="Misra S."/>
            <person name="Crosby M.A."/>
            <person name="Mungall C.J."/>
            <person name="Matthews B.B."/>
            <person name="Campbell K.S."/>
            <person name="Hradecky P."/>
            <person name="Huang Y."/>
            <person name="Kaminker J.S."/>
            <person name="Millburn G.H."/>
            <person name="Prochnik S.E."/>
            <person name="Smith C.D."/>
            <person name="Tupy J.L."/>
            <person name="Whitfield E.J."/>
            <person name="Bayraktaroglu L."/>
            <person name="Berman B.P."/>
            <person name="Bettencourt B.R."/>
            <person name="Celniker S.E."/>
            <person name="de Grey A.D.N.J."/>
            <person name="Drysdale R.A."/>
            <person name="Harris N.L."/>
            <person name="Richter J."/>
            <person name="Russo S."/>
            <person name="Schroeder A.J."/>
            <person name="Shu S.Q."/>
            <person name="Stapleton M."/>
            <person name="Yamada C."/>
            <person name="Ashburner M."/>
            <person name="Gelbart W.M."/>
            <person name="Rubin G.M."/>
            <person name="Lewis S.E."/>
        </authorList>
    </citation>
    <scope>GENOME REANNOTATION</scope>
    <source>
        <strain>Berkeley</strain>
    </source>
</reference>
<name>NH2L1_DROME</name>
<keyword id="KW-0507">mRNA processing</keyword>
<keyword id="KW-0508">mRNA splicing</keyword>
<keyword id="KW-0539">Nucleus</keyword>
<keyword id="KW-1185">Reference proteome</keyword>
<keyword id="KW-0687">Ribonucleoprotein</keyword>
<keyword id="KW-0694">RNA-binding</keyword>
<keyword id="KW-0747">Spliceosome</keyword>
<gene>
    <name type="primary">hoip</name>
    <name type="ORF">CG3949</name>
</gene>
<accession>Q9U3Z7</accession>
<accession>Q9VL98</accession>
<proteinExistence type="evidence at transcript level"/>